<name>CNN2_HUMAN</name>
<reference key="1">
    <citation type="journal article" date="1996" name="J. Biochem.">
        <title>Molecular cloning and characterization of human non-smooth muscle calponin.</title>
        <authorList>
            <person name="Masuda H."/>
            <person name="Tanaka K."/>
            <person name="Takagi M."/>
            <person name="Ohgami K."/>
            <person name="Sakamaki T."/>
            <person name="Shibata N."/>
            <person name="Takahashi K."/>
        </authorList>
    </citation>
    <scope>NUCLEOTIDE SEQUENCE [MRNA] (ISOFORM 1)</scope>
    <source>
        <tissue>Heart</tissue>
    </source>
</reference>
<reference key="2">
    <citation type="journal article" date="2004" name="Nat. Genet.">
        <title>Complete sequencing and characterization of 21,243 full-length human cDNAs.</title>
        <authorList>
            <person name="Ota T."/>
            <person name="Suzuki Y."/>
            <person name="Nishikawa T."/>
            <person name="Otsuki T."/>
            <person name="Sugiyama T."/>
            <person name="Irie R."/>
            <person name="Wakamatsu A."/>
            <person name="Hayashi K."/>
            <person name="Sato H."/>
            <person name="Nagai K."/>
            <person name="Kimura K."/>
            <person name="Makita H."/>
            <person name="Sekine M."/>
            <person name="Obayashi M."/>
            <person name="Nishi T."/>
            <person name="Shibahara T."/>
            <person name="Tanaka T."/>
            <person name="Ishii S."/>
            <person name="Yamamoto J."/>
            <person name="Saito K."/>
            <person name="Kawai Y."/>
            <person name="Isono Y."/>
            <person name="Nakamura Y."/>
            <person name="Nagahari K."/>
            <person name="Murakami K."/>
            <person name="Yasuda T."/>
            <person name="Iwayanagi T."/>
            <person name="Wagatsuma M."/>
            <person name="Shiratori A."/>
            <person name="Sudo H."/>
            <person name="Hosoiri T."/>
            <person name="Kaku Y."/>
            <person name="Kodaira H."/>
            <person name="Kondo H."/>
            <person name="Sugawara M."/>
            <person name="Takahashi M."/>
            <person name="Kanda K."/>
            <person name="Yokoi T."/>
            <person name="Furuya T."/>
            <person name="Kikkawa E."/>
            <person name="Omura Y."/>
            <person name="Abe K."/>
            <person name="Kamihara K."/>
            <person name="Katsuta N."/>
            <person name="Sato K."/>
            <person name="Tanikawa M."/>
            <person name="Yamazaki M."/>
            <person name="Ninomiya K."/>
            <person name="Ishibashi T."/>
            <person name="Yamashita H."/>
            <person name="Murakawa K."/>
            <person name="Fujimori K."/>
            <person name="Tanai H."/>
            <person name="Kimata M."/>
            <person name="Watanabe M."/>
            <person name="Hiraoka S."/>
            <person name="Chiba Y."/>
            <person name="Ishida S."/>
            <person name="Ono Y."/>
            <person name="Takiguchi S."/>
            <person name="Watanabe S."/>
            <person name="Yosida M."/>
            <person name="Hotuta T."/>
            <person name="Kusano J."/>
            <person name="Kanehori K."/>
            <person name="Takahashi-Fujii A."/>
            <person name="Hara H."/>
            <person name="Tanase T.-O."/>
            <person name="Nomura Y."/>
            <person name="Togiya S."/>
            <person name="Komai F."/>
            <person name="Hara R."/>
            <person name="Takeuchi K."/>
            <person name="Arita M."/>
            <person name="Imose N."/>
            <person name="Musashino K."/>
            <person name="Yuuki H."/>
            <person name="Oshima A."/>
            <person name="Sasaki N."/>
            <person name="Aotsuka S."/>
            <person name="Yoshikawa Y."/>
            <person name="Matsunawa H."/>
            <person name="Ichihara T."/>
            <person name="Shiohata N."/>
            <person name="Sano S."/>
            <person name="Moriya S."/>
            <person name="Momiyama H."/>
            <person name="Satoh N."/>
            <person name="Takami S."/>
            <person name="Terashima Y."/>
            <person name="Suzuki O."/>
            <person name="Nakagawa S."/>
            <person name="Senoh A."/>
            <person name="Mizoguchi H."/>
            <person name="Goto Y."/>
            <person name="Shimizu F."/>
            <person name="Wakebe H."/>
            <person name="Hishigaki H."/>
            <person name="Watanabe T."/>
            <person name="Sugiyama A."/>
            <person name="Takemoto M."/>
            <person name="Kawakami B."/>
            <person name="Yamazaki M."/>
            <person name="Watanabe K."/>
            <person name="Kumagai A."/>
            <person name="Itakura S."/>
            <person name="Fukuzumi Y."/>
            <person name="Fujimori Y."/>
            <person name="Komiyama M."/>
            <person name="Tashiro H."/>
            <person name="Tanigami A."/>
            <person name="Fujiwara T."/>
            <person name="Ono T."/>
            <person name="Yamada K."/>
            <person name="Fujii Y."/>
            <person name="Ozaki K."/>
            <person name="Hirao M."/>
            <person name="Ohmori Y."/>
            <person name="Kawabata A."/>
            <person name="Hikiji T."/>
            <person name="Kobatake N."/>
            <person name="Inagaki H."/>
            <person name="Ikema Y."/>
            <person name="Okamoto S."/>
            <person name="Okitani R."/>
            <person name="Kawakami T."/>
            <person name="Noguchi S."/>
            <person name="Itoh T."/>
            <person name="Shigeta K."/>
            <person name="Senba T."/>
            <person name="Matsumura K."/>
            <person name="Nakajima Y."/>
            <person name="Mizuno T."/>
            <person name="Morinaga M."/>
            <person name="Sasaki M."/>
            <person name="Togashi T."/>
            <person name="Oyama M."/>
            <person name="Hata H."/>
            <person name="Watanabe M."/>
            <person name="Komatsu T."/>
            <person name="Mizushima-Sugano J."/>
            <person name="Satoh T."/>
            <person name="Shirai Y."/>
            <person name="Takahashi Y."/>
            <person name="Nakagawa K."/>
            <person name="Okumura K."/>
            <person name="Nagase T."/>
            <person name="Nomura N."/>
            <person name="Kikuchi H."/>
            <person name="Masuho Y."/>
            <person name="Yamashita R."/>
            <person name="Nakai K."/>
            <person name="Yada T."/>
            <person name="Nakamura Y."/>
            <person name="Ohara O."/>
            <person name="Isogai T."/>
            <person name="Sugano S."/>
        </authorList>
    </citation>
    <scope>NUCLEOTIDE SEQUENCE [LARGE SCALE MRNA] (ISOFORM 2)</scope>
    <source>
        <tissue>Uterus</tissue>
    </source>
</reference>
<reference key="3">
    <citation type="journal article" date="2004" name="Nature">
        <title>The DNA sequence and biology of human chromosome 19.</title>
        <authorList>
            <person name="Grimwood J."/>
            <person name="Gordon L.A."/>
            <person name="Olsen A.S."/>
            <person name="Terry A."/>
            <person name="Schmutz J."/>
            <person name="Lamerdin J.E."/>
            <person name="Hellsten U."/>
            <person name="Goodstein D."/>
            <person name="Couronne O."/>
            <person name="Tran-Gyamfi M."/>
            <person name="Aerts A."/>
            <person name="Altherr M."/>
            <person name="Ashworth L."/>
            <person name="Bajorek E."/>
            <person name="Black S."/>
            <person name="Branscomb E."/>
            <person name="Caenepeel S."/>
            <person name="Carrano A.V."/>
            <person name="Caoile C."/>
            <person name="Chan Y.M."/>
            <person name="Christensen M."/>
            <person name="Cleland C.A."/>
            <person name="Copeland A."/>
            <person name="Dalin E."/>
            <person name="Dehal P."/>
            <person name="Denys M."/>
            <person name="Detter J.C."/>
            <person name="Escobar J."/>
            <person name="Flowers D."/>
            <person name="Fotopulos D."/>
            <person name="Garcia C."/>
            <person name="Georgescu A.M."/>
            <person name="Glavina T."/>
            <person name="Gomez M."/>
            <person name="Gonzales E."/>
            <person name="Groza M."/>
            <person name="Hammon N."/>
            <person name="Hawkins T."/>
            <person name="Haydu L."/>
            <person name="Ho I."/>
            <person name="Huang W."/>
            <person name="Israni S."/>
            <person name="Jett J."/>
            <person name="Kadner K."/>
            <person name="Kimball H."/>
            <person name="Kobayashi A."/>
            <person name="Larionov V."/>
            <person name="Leem S.-H."/>
            <person name="Lopez F."/>
            <person name="Lou Y."/>
            <person name="Lowry S."/>
            <person name="Malfatti S."/>
            <person name="Martinez D."/>
            <person name="McCready P.M."/>
            <person name="Medina C."/>
            <person name="Morgan J."/>
            <person name="Nelson K."/>
            <person name="Nolan M."/>
            <person name="Ovcharenko I."/>
            <person name="Pitluck S."/>
            <person name="Pollard M."/>
            <person name="Popkie A.P."/>
            <person name="Predki P."/>
            <person name="Quan G."/>
            <person name="Ramirez L."/>
            <person name="Rash S."/>
            <person name="Retterer J."/>
            <person name="Rodriguez A."/>
            <person name="Rogers S."/>
            <person name="Salamov A."/>
            <person name="Salazar A."/>
            <person name="She X."/>
            <person name="Smith D."/>
            <person name="Slezak T."/>
            <person name="Solovyev V."/>
            <person name="Thayer N."/>
            <person name="Tice H."/>
            <person name="Tsai M."/>
            <person name="Ustaszewska A."/>
            <person name="Vo N."/>
            <person name="Wagner M."/>
            <person name="Wheeler J."/>
            <person name="Wu K."/>
            <person name="Xie G."/>
            <person name="Yang J."/>
            <person name="Dubchak I."/>
            <person name="Furey T.S."/>
            <person name="DeJong P."/>
            <person name="Dickson M."/>
            <person name="Gordon D."/>
            <person name="Eichler E.E."/>
            <person name="Pennacchio L.A."/>
            <person name="Richardson P."/>
            <person name="Stubbs L."/>
            <person name="Rokhsar D.S."/>
            <person name="Myers R.M."/>
            <person name="Rubin E.M."/>
            <person name="Lucas S.M."/>
        </authorList>
    </citation>
    <scope>NUCLEOTIDE SEQUENCE [LARGE SCALE GENOMIC DNA]</scope>
</reference>
<reference key="4">
    <citation type="submission" date="2005-09" db="EMBL/GenBank/DDBJ databases">
        <authorList>
            <person name="Mural R.J."/>
            <person name="Istrail S."/>
            <person name="Sutton G.G."/>
            <person name="Florea L."/>
            <person name="Halpern A.L."/>
            <person name="Mobarry C.M."/>
            <person name="Lippert R."/>
            <person name="Walenz B."/>
            <person name="Shatkay H."/>
            <person name="Dew I."/>
            <person name="Miller J.R."/>
            <person name="Flanigan M.J."/>
            <person name="Edwards N.J."/>
            <person name="Bolanos R."/>
            <person name="Fasulo D."/>
            <person name="Halldorsson B.V."/>
            <person name="Hannenhalli S."/>
            <person name="Turner R."/>
            <person name="Yooseph S."/>
            <person name="Lu F."/>
            <person name="Nusskern D.R."/>
            <person name="Shue B.C."/>
            <person name="Zheng X.H."/>
            <person name="Zhong F."/>
            <person name="Delcher A.L."/>
            <person name="Huson D.H."/>
            <person name="Kravitz S.A."/>
            <person name="Mouchard L."/>
            <person name="Reinert K."/>
            <person name="Remington K.A."/>
            <person name="Clark A.G."/>
            <person name="Waterman M.S."/>
            <person name="Eichler E.E."/>
            <person name="Adams M.D."/>
            <person name="Hunkapiller M.W."/>
            <person name="Myers E.W."/>
            <person name="Venter J.C."/>
        </authorList>
    </citation>
    <scope>NUCLEOTIDE SEQUENCE [LARGE SCALE GENOMIC DNA]</scope>
</reference>
<reference key="5">
    <citation type="journal article" date="2004" name="Genome Res.">
        <title>The status, quality, and expansion of the NIH full-length cDNA project: the Mammalian Gene Collection (MGC).</title>
        <authorList>
            <consortium name="The MGC Project Team"/>
        </authorList>
    </citation>
    <scope>NUCLEOTIDE SEQUENCE [LARGE SCALE MRNA] (ISOFORM 1)</scope>
</reference>
<reference key="6">
    <citation type="journal article" date="1997" name="Mol. Cell. Biol.">
        <title>A unique downregulation of h2-calponin gene expression in Down syndrome: a possible attenuation mechanism for fetal survival by methylation at the CpG island in the trisomic chromosome 21.</title>
        <authorList>
            <person name="Kuromitsu J."/>
            <person name="Yamashita H."/>
            <person name="Kataoka H."/>
            <person name="Takahara T."/>
            <person name="Muramatsu M."/>
            <person name="Sekine T."/>
            <person name="Okamoto N."/>
            <person name="Furuichi Y."/>
            <person name="Hayashizaki Y."/>
        </authorList>
    </citation>
    <scope>NUCLEOTIDE SEQUENCE [MRNA] OF 1-202 (ISOFORM 1)</scope>
    <source>
        <tissue>Placenta</tissue>
    </source>
</reference>
<reference key="7">
    <citation type="journal article" date="2003" name="Nat. Biotechnol.">
        <title>Exploring proteomes and analyzing protein processing by mass spectrometric identification of sorted N-terminal peptides.</title>
        <authorList>
            <person name="Gevaert K."/>
            <person name="Goethals M."/>
            <person name="Martens L."/>
            <person name="Van Damme J."/>
            <person name="Staes A."/>
            <person name="Thomas G.R."/>
            <person name="Vandekerckhove J."/>
        </authorList>
    </citation>
    <scope>PROTEIN SEQUENCE OF 2-21</scope>
    <source>
        <tissue>Platelet</tissue>
    </source>
</reference>
<reference key="8">
    <citation type="journal article" date="2009" name="Science">
        <title>Lysine acetylation targets protein complexes and co-regulates major cellular functions.</title>
        <authorList>
            <person name="Choudhary C."/>
            <person name="Kumar C."/>
            <person name="Gnad F."/>
            <person name="Nielsen M.L."/>
            <person name="Rehman M."/>
            <person name="Walther T.C."/>
            <person name="Olsen J.V."/>
            <person name="Mann M."/>
        </authorList>
    </citation>
    <scope>ACETYLATION [LARGE SCALE ANALYSIS] AT LYS-8 AND LYS-25</scope>
    <scope>IDENTIFICATION BY MASS SPECTROMETRY [LARGE SCALE ANALYSIS]</scope>
</reference>
<reference key="9">
    <citation type="journal article" date="2011" name="BMC Syst. Biol.">
        <title>Initial characterization of the human central proteome.</title>
        <authorList>
            <person name="Burkard T.R."/>
            <person name="Planyavsky M."/>
            <person name="Kaupe I."/>
            <person name="Breitwieser F.P."/>
            <person name="Buerckstuemmer T."/>
            <person name="Bennett K.L."/>
            <person name="Superti-Furga G."/>
            <person name="Colinge J."/>
        </authorList>
    </citation>
    <scope>IDENTIFICATION BY MASS SPECTROMETRY [LARGE SCALE ANALYSIS]</scope>
</reference>
<reference key="10">
    <citation type="journal article" date="2012" name="Proc. Natl. Acad. Sci. U.S.A.">
        <title>N-terminal acetylome analyses and functional insights of the N-terminal acetyltransferase NatB.</title>
        <authorList>
            <person name="Van Damme P."/>
            <person name="Lasa M."/>
            <person name="Polevoda B."/>
            <person name="Gazquez C."/>
            <person name="Elosegui-Artola A."/>
            <person name="Kim D.S."/>
            <person name="De Juan-Pardo E."/>
            <person name="Demeyer K."/>
            <person name="Hole K."/>
            <person name="Larrea E."/>
            <person name="Timmerman E."/>
            <person name="Prieto J."/>
            <person name="Arnesen T."/>
            <person name="Sherman F."/>
            <person name="Gevaert K."/>
            <person name="Aldabe R."/>
        </authorList>
    </citation>
    <scope>ACETYLATION [LARGE SCALE ANALYSIS] AT SER-2</scope>
    <scope>CLEAVAGE OF INITIATOR METHIONINE [LARGE SCALE ANALYSIS]</scope>
    <scope>IDENTIFICATION BY MASS SPECTROMETRY [LARGE SCALE ANALYSIS]</scope>
</reference>
<reference key="11">
    <citation type="journal article" date="2013" name="J. Proteome Res.">
        <title>Toward a comprehensive characterization of a human cancer cell phosphoproteome.</title>
        <authorList>
            <person name="Zhou H."/>
            <person name="Di Palma S."/>
            <person name="Preisinger C."/>
            <person name="Peng M."/>
            <person name="Polat A.N."/>
            <person name="Heck A.J."/>
            <person name="Mohammed S."/>
        </authorList>
    </citation>
    <scope>PHOSPHORYLATION [LARGE SCALE ANALYSIS] AT SER-138</scope>
    <scope>IDENTIFICATION BY MASS SPECTROMETRY [LARGE SCALE ANALYSIS]</scope>
    <source>
        <tissue>Erythroleukemia</tissue>
    </source>
</reference>
<reference key="12">
    <citation type="journal article" date="2015" name="Proteomics">
        <title>N-terminome analysis of the human mitochondrial proteome.</title>
        <authorList>
            <person name="Vaca Jacome A.S."/>
            <person name="Rabilloud T."/>
            <person name="Schaeffer-Reiss C."/>
            <person name="Rompais M."/>
            <person name="Ayoub D."/>
            <person name="Lane L."/>
            <person name="Bairoch A."/>
            <person name="Van Dorsselaer A."/>
            <person name="Carapito C."/>
        </authorList>
    </citation>
    <scope>IDENTIFICATION BY MASS SPECTROMETRY [LARGE SCALE ANALYSIS]</scope>
</reference>
<reference key="13">
    <citation type="submission" date="2005-08" db="PDB data bank">
        <title>Solution structure of the CH domain of human calponin-2.</title>
        <authorList>
            <consortium name="RIKEN structural genomics initiative (RSGI)"/>
        </authorList>
    </citation>
    <scope>STRUCTURE BY NMR OF 20-152</scope>
</reference>
<comment type="function">
    <text>Thin filament-associated protein that is implicated in the regulation and modulation of smooth muscle contraction. It is capable of binding to actin, calmodulin and tropomyosin. The interaction of calponin with actin inhibits the actomyosin Mg-ATPase activity.</text>
</comment>
<comment type="alternative products">
    <event type="alternative splicing"/>
    <isoform>
        <id>Q99439-1</id>
        <name>1</name>
        <sequence type="displayed"/>
    </isoform>
    <isoform>
        <id>Q99439-2</id>
        <name>2</name>
        <sequence type="described" ref="VSP_042941"/>
    </isoform>
</comment>
<comment type="tissue specificity">
    <text>Heart and smooth muscle.</text>
</comment>
<comment type="similarity">
    <text evidence="5">Belongs to the calponin family.</text>
</comment>
<proteinExistence type="evidence at protein level"/>
<organism>
    <name type="scientific">Homo sapiens</name>
    <name type="common">Human</name>
    <dbReference type="NCBI Taxonomy" id="9606"/>
    <lineage>
        <taxon>Eukaryota</taxon>
        <taxon>Metazoa</taxon>
        <taxon>Chordata</taxon>
        <taxon>Craniata</taxon>
        <taxon>Vertebrata</taxon>
        <taxon>Euteleostomi</taxon>
        <taxon>Mammalia</taxon>
        <taxon>Eutheria</taxon>
        <taxon>Euarchontoglires</taxon>
        <taxon>Primates</taxon>
        <taxon>Haplorrhini</taxon>
        <taxon>Catarrhini</taxon>
        <taxon>Hominidae</taxon>
        <taxon>Homo</taxon>
    </lineage>
</organism>
<accession>Q99439</accession>
<accession>A5D8U8</accession>
<accession>A6NFI4</accession>
<accession>D6W5X9</accession>
<accession>Q92578</accession>
<feature type="initiator methionine" description="Removed" evidence="3 7">
    <location>
        <position position="1"/>
    </location>
</feature>
<feature type="chain" id="PRO_0000204773" description="Calponin-2">
    <location>
        <begin position="2"/>
        <end position="309"/>
    </location>
</feature>
<feature type="domain" description="Calponin-homology (CH)" evidence="1">
    <location>
        <begin position="28"/>
        <end position="132"/>
    </location>
</feature>
<feature type="repeat" description="Calponin-like 1">
    <location>
        <begin position="166"/>
        <end position="191"/>
    </location>
</feature>
<feature type="repeat" description="Calponin-like 2">
    <location>
        <begin position="206"/>
        <end position="231"/>
    </location>
</feature>
<feature type="repeat" description="Calponin-like 3">
    <location>
        <begin position="245"/>
        <end position="269"/>
    </location>
</feature>
<feature type="region of interest" description="Disordered" evidence="2">
    <location>
        <begin position="283"/>
        <end position="309"/>
    </location>
</feature>
<feature type="modified residue" description="N-acetylserine" evidence="7">
    <location>
        <position position="2"/>
    </location>
</feature>
<feature type="modified residue" description="N6-acetyllysine" evidence="6">
    <location>
        <position position="8"/>
    </location>
</feature>
<feature type="modified residue" description="N6-acetyllysine" evidence="6">
    <location>
        <position position="25"/>
    </location>
</feature>
<feature type="modified residue" description="Phosphoserine" evidence="8">
    <location>
        <position position="138"/>
    </location>
</feature>
<feature type="splice variant" id="VSP_042941" description="In isoform 2." evidence="4">
    <location>
        <begin position="131"/>
        <end position="169"/>
    </location>
</feature>
<feature type="sequence conflict" description="In Ref. 6; BAA20887." evidence="5" ref="6">
    <original>K</original>
    <variation>R</variation>
    <location>
        <position position="52"/>
    </location>
</feature>
<feature type="sequence conflict" description="In Ref. 6; BAA20887." evidence="5" ref="6">
    <original>I</original>
    <variation>V</variation>
    <location>
        <position position="142"/>
    </location>
</feature>
<feature type="sequence conflict" description="In Ref. 6; BAA20887." evidence="5" ref="6">
    <original>V</original>
    <variation>G</variation>
    <location>
        <position position="165"/>
    </location>
</feature>
<feature type="sequence conflict" description="In Ref. 6; BAA20887." evidence="5" ref="6">
    <original>TA</original>
    <variation>HL</variation>
    <location>
        <begin position="182"/>
        <end position="183"/>
    </location>
</feature>
<feature type="sequence conflict" description="In Ref. 6; BAA20887." evidence="5" ref="6">
    <original>RRHLYDPKNHILPPMD</original>
    <variation>AGISMTPRTISCPPWT</variation>
    <location>
        <begin position="187"/>
        <end position="202"/>
    </location>
</feature>
<feature type="helix" evidence="9">
    <location>
        <begin position="30"/>
        <end position="42"/>
    </location>
</feature>
<feature type="helix" evidence="9">
    <location>
        <begin position="50"/>
        <end position="55"/>
    </location>
</feature>
<feature type="helix" evidence="9">
    <location>
        <begin position="59"/>
        <end position="67"/>
    </location>
</feature>
<feature type="helix" evidence="9">
    <location>
        <begin position="81"/>
        <end position="98"/>
    </location>
</feature>
<feature type="strand" evidence="9">
    <location>
        <begin position="102"/>
        <end position="104"/>
    </location>
</feature>
<feature type="helix" evidence="9">
    <location>
        <begin position="108"/>
        <end position="112"/>
    </location>
</feature>
<feature type="helix" evidence="9">
    <location>
        <begin position="118"/>
        <end position="131"/>
    </location>
</feature>
<feature type="helix" evidence="9">
    <location>
        <begin position="132"/>
        <end position="134"/>
    </location>
</feature>
<protein>
    <recommendedName>
        <fullName>Calponin-2</fullName>
    </recommendedName>
    <alternativeName>
        <fullName>Calponin H2, smooth muscle</fullName>
    </alternativeName>
    <alternativeName>
        <fullName>Neutral calponin</fullName>
    </alternativeName>
</protein>
<gene>
    <name type="primary">CNN2</name>
</gene>
<keyword id="KW-0002">3D-structure</keyword>
<keyword id="KW-0007">Acetylation</keyword>
<keyword id="KW-0009">Actin-binding</keyword>
<keyword id="KW-0025">Alternative splicing</keyword>
<keyword id="KW-0112">Calmodulin-binding</keyword>
<keyword id="KW-0903">Direct protein sequencing</keyword>
<keyword id="KW-0597">Phosphoprotein</keyword>
<keyword id="KW-1267">Proteomics identification</keyword>
<keyword id="KW-1185">Reference proteome</keyword>
<keyword id="KW-0677">Repeat</keyword>
<sequence length="309" mass="33697">MSSTQFNKGPSYGLSAEVKNRLLSKYDPQKEAELRTWIEGLTGLSIGPDFQKGLKDGTILCTLMNKLQPGSVPKINRSMQNWHQLENLSNFIKAMVSYGMNPVDLFEANDLFESGNMTQVQVSLLALAGKAKTKGLQSGVDIGVKYSEKQERNFDDATMKAGQCVIGLQMGTNKCASQSGMTAYGTRRHLYDPKNHILPPMDHSTISLQMGTNKCASQVGMTAPGTRRHIYDTKLGTDKCDNSSMSLQMGYTQGANQSGQVFGLGRQIYDPKYCPQGTVADGAPSGTGDCPDPGEVPEYPPYYQEEAGY</sequence>
<dbReference type="EMBL" id="D83735">
    <property type="protein sequence ID" value="BAA12090.1"/>
    <property type="molecule type" value="mRNA"/>
</dbReference>
<dbReference type="EMBL" id="AK126391">
    <property type="protein sequence ID" value="BAG54322.1"/>
    <property type="molecule type" value="mRNA"/>
</dbReference>
<dbReference type="EMBL" id="AC004528">
    <property type="status" value="NOT_ANNOTATED_CDS"/>
    <property type="molecule type" value="Genomic_DNA"/>
</dbReference>
<dbReference type="EMBL" id="AC011558">
    <property type="status" value="NOT_ANNOTATED_CDS"/>
    <property type="molecule type" value="Genomic_DNA"/>
</dbReference>
<dbReference type="EMBL" id="CH471139">
    <property type="protein sequence ID" value="EAW69565.1"/>
    <property type="molecule type" value="Genomic_DNA"/>
</dbReference>
<dbReference type="EMBL" id="CH471139">
    <property type="protein sequence ID" value="EAW69567.1"/>
    <property type="molecule type" value="Genomic_DNA"/>
</dbReference>
<dbReference type="EMBL" id="CH471139">
    <property type="protein sequence ID" value="EAW69570.1"/>
    <property type="molecule type" value="Genomic_DNA"/>
</dbReference>
<dbReference type="EMBL" id="BC141818">
    <property type="protein sequence ID" value="AAI41819.1"/>
    <property type="molecule type" value="mRNA"/>
</dbReference>
<dbReference type="EMBL" id="BC141833">
    <property type="protein sequence ID" value="AAI41834.1"/>
    <property type="molecule type" value="mRNA"/>
</dbReference>
<dbReference type="EMBL" id="D86059">
    <property type="protein sequence ID" value="BAA20887.1"/>
    <property type="molecule type" value="mRNA"/>
</dbReference>
<dbReference type="CCDS" id="CCDS12053.1">
    <molecule id="Q99439-1"/>
</dbReference>
<dbReference type="CCDS" id="CCDS12054.1">
    <molecule id="Q99439-2"/>
</dbReference>
<dbReference type="PIR" id="JC4906">
    <property type="entry name" value="JC4906"/>
</dbReference>
<dbReference type="RefSeq" id="NP_001290428.1">
    <property type="nucleotide sequence ID" value="NM_001303499.1"/>
</dbReference>
<dbReference type="RefSeq" id="NP_001290430.1">
    <property type="nucleotide sequence ID" value="NM_001303501.1"/>
</dbReference>
<dbReference type="RefSeq" id="NP_004359.1">
    <molecule id="Q99439-1"/>
    <property type="nucleotide sequence ID" value="NM_004368.4"/>
</dbReference>
<dbReference type="RefSeq" id="NP_958434.1">
    <molecule id="Q99439-2"/>
    <property type="nucleotide sequence ID" value="NM_201277.3"/>
</dbReference>
<dbReference type="PDB" id="1WYN">
    <property type="method" value="NMR"/>
    <property type="chains" value="A=20-152"/>
</dbReference>
<dbReference type="PDBsum" id="1WYN"/>
<dbReference type="SMR" id="Q99439"/>
<dbReference type="BioGRID" id="107665">
    <property type="interactions" value="93"/>
</dbReference>
<dbReference type="FunCoup" id="Q99439">
    <property type="interactions" value="206"/>
</dbReference>
<dbReference type="IntAct" id="Q99439">
    <property type="interactions" value="32"/>
</dbReference>
<dbReference type="MINT" id="Q99439"/>
<dbReference type="STRING" id="9606.ENSP00000456436"/>
<dbReference type="ChEMBL" id="CHEMBL4295930"/>
<dbReference type="GlyGen" id="Q99439">
    <property type="glycosylation" value="4 sites, 1 N-linked glycan (1 site), 1 O-linked glycan (3 sites)"/>
</dbReference>
<dbReference type="iPTMnet" id="Q99439"/>
<dbReference type="MetOSite" id="Q99439"/>
<dbReference type="PhosphoSitePlus" id="Q99439"/>
<dbReference type="SwissPalm" id="Q99439"/>
<dbReference type="BioMuta" id="CNN2"/>
<dbReference type="DMDM" id="6226844"/>
<dbReference type="OGP" id="Q99439"/>
<dbReference type="CPTAC" id="CPTAC-337"/>
<dbReference type="CPTAC" id="CPTAC-338"/>
<dbReference type="jPOST" id="Q99439"/>
<dbReference type="MassIVE" id="Q99439"/>
<dbReference type="PaxDb" id="9606-ENSP00000263097"/>
<dbReference type="PeptideAtlas" id="Q99439"/>
<dbReference type="PRIDE" id="Q99439"/>
<dbReference type="ProteomicsDB" id="78268">
    <molecule id="Q99439-1"/>
</dbReference>
<dbReference type="ProteomicsDB" id="78269">
    <molecule id="Q99439-2"/>
</dbReference>
<dbReference type="Pumba" id="Q99439"/>
<dbReference type="Antibodypedia" id="22499">
    <property type="antibodies" value="409 antibodies from 38 providers"/>
</dbReference>
<dbReference type="DNASU" id="1265"/>
<dbReference type="Ensembl" id="ENST00000263097.9">
    <molecule id="Q99439-1"/>
    <property type="protein sequence ID" value="ENSP00000263097.2"/>
    <property type="gene ID" value="ENSG00000064666.15"/>
</dbReference>
<dbReference type="Ensembl" id="ENST00000348419.7">
    <molecule id="Q99439-2"/>
    <property type="protein sequence ID" value="ENSP00000340129.2"/>
    <property type="gene ID" value="ENSG00000064666.15"/>
</dbReference>
<dbReference type="GeneID" id="1265"/>
<dbReference type="KEGG" id="hsa:1265"/>
<dbReference type="MANE-Select" id="ENST00000263097.9">
    <property type="protein sequence ID" value="ENSP00000263097.2"/>
    <property type="RefSeq nucleotide sequence ID" value="NM_004368.4"/>
    <property type="RefSeq protein sequence ID" value="NP_004359.1"/>
</dbReference>
<dbReference type="UCSC" id="uc002lqu.4">
    <molecule id="Q99439-1"/>
    <property type="organism name" value="human"/>
</dbReference>
<dbReference type="AGR" id="HGNC:2156"/>
<dbReference type="CTD" id="1265"/>
<dbReference type="DisGeNET" id="1265"/>
<dbReference type="GeneCards" id="CNN2"/>
<dbReference type="HGNC" id="HGNC:2156">
    <property type="gene designation" value="CNN2"/>
</dbReference>
<dbReference type="HPA" id="ENSG00000064666">
    <property type="expression patterns" value="Low tissue specificity"/>
</dbReference>
<dbReference type="MIM" id="602373">
    <property type="type" value="gene"/>
</dbReference>
<dbReference type="neXtProt" id="NX_Q99439"/>
<dbReference type="OpenTargets" id="ENSG00000064666"/>
<dbReference type="PharmGKB" id="PA26666"/>
<dbReference type="VEuPathDB" id="HostDB:ENSG00000064666"/>
<dbReference type="eggNOG" id="KOG2046">
    <property type="taxonomic scope" value="Eukaryota"/>
</dbReference>
<dbReference type="GeneTree" id="ENSGT00940000154355"/>
<dbReference type="HOGENOM" id="CLU_055232_0_2_1"/>
<dbReference type="InParanoid" id="Q99439"/>
<dbReference type="OrthoDB" id="21595at2759"/>
<dbReference type="PAN-GO" id="Q99439">
    <property type="GO annotations" value="1 GO annotation based on evolutionary models"/>
</dbReference>
<dbReference type="PhylomeDB" id="Q99439"/>
<dbReference type="TreeFam" id="TF313921"/>
<dbReference type="PathwayCommons" id="Q99439"/>
<dbReference type="Reactome" id="R-HSA-6798695">
    <property type="pathway name" value="Neutrophil degranulation"/>
</dbReference>
<dbReference type="Reactome" id="R-HSA-8950505">
    <property type="pathway name" value="Gene and protein expression by JAK-STAT signaling after Interleukin-12 stimulation"/>
</dbReference>
<dbReference type="SignaLink" id="Q99439"/>
<dbReference type="BioGRID-ORCS" id="1265">
    <property type="hits" value="266 hits in 1156 CRISPR screens"/>
</dbReference>
<dbReference type="CD-CODE" id="DEE660B4">
    <property type="entry name" value="Stress granule"/>
</dbReference>
<dbReference type="ChiTaRS" id="CNN2">
    <property type="organism name" value="human"/>
</dbReference>
<dbReference type="EvolutionaryTrace" id="Q99439"/>
<dbReference type="GenomeRNAi" id="1265"/>
<dbReference type="Pharos" id="Q99439">
    <property type="development level" value="Tbio"/>
</dbReference>
<dbReference type="PRO" id="PR:Q99439"/>
<dbReference type="Proteomes" id="UP000005640">
    <property type="component" value="Chromosome 19"/>
</dbReference>
<dbReference type="RNAct" id="Q99439">
    <property type="molecule type" value="protein"/>
</dbReference>
<dbReference type="Bgee" id="ENSG00000064666">
    <property type="expression patterns" value="Expressed in granulocyte and 170 other cell types or tissues"/>
</dbReference>
<dbReference type="ExpressionAtlas" id="Q99439">
    <property type="expression patterns" value="baseline and differential"/>
</dbReference>
<dbReference type="GO" id="GO:0015629">
    <property type="term" value="C:actin cytoskeleton"/>
    <property type="evidence" value="ECO:0000318"/>
    <property type="project" value="GO_Central"/>
</dbReference>
<dbReference type="GO" id="GO:0005911">
    <property type="term" value="C:cell-cell junction"/>
    <property type="evidence" value="ECO:0000304"/>
    <property type="project" value="ProtInc"/>
</dbReference>
<dbReference type="GO" id="GO:0005856">
    <property type="term" value="C:cytoskeleton"/>
    <property type="evidence" value="ECO:0000304"/>
    <property type="project" value="ProtInc"/>
</dbReference>
<dbReference type="GO" id="GO:0005576">
    <property type="term" value="C:extracellular region"/>
    <property type="evidence" value="ECO:0000304"/>
    <property type="project" value="Reactome"/>
</dbReference>
<dbReference type="GO" id="GO:0005925">
    <property type="term" value="C:focal adhesion"/>
    <property type="evidence" value="ECO:0007005"/>
    <property type="project" value="UniProtKB"/>
</dbReference>
<dbReference type="GO" id="GO:0016020">
    <property type="term" value="C:membrane"/>
    <property type="evidence" value="ECO:0007005"/>
    <property type="project" value="UniProtKB"/>
</dbReference>
<dbReference type="GO" id="GO:0035580">
    <property type="term" value="C:specific granule lumen"/>
    <property type="evidence" value="ECO:0000304"/>
    <property type="project" value="Reactome"/>
</dbReference>
<dbReference type="GO" id="GO:0001725">
    <property type="term" value="C:stress fiber"/>
    <property type="evidence" value="ECO:0000314"/>
    <property type="project" value="MGI"/>
</dbReference>
<dbReference type="GO" id="GO:1904724">
    <property type="term" value="C:tertiary granule lumen"/>
    <property type="evidence" value="ECO:0000304"/>
    <property type="project" value="Reactome"/>
</dbReference>
<dbReference type="GO" id="GO:0003779">
    <property type="term" value="F:actin binding"/>
    <property type="evidence" value="ECO:0000304"/>
    <property type="project" value="ProtInc"/>
</dbReference>
<dbReference type="GO" id="GO:0051015">
    <property type="term" value="F:actin filament binding"/>
    <property type="evidence" value="ECO:0000318"/>
    <property type="project" value="GO_Central"/>
</dbReference>
<dbReference type="GO" id="GO:0045296">
    <property type="term" value="F:cadherin binding"/>
    <property type="evidence" value="ECO:0007005"/>
    <property type="project" value="BHF-UCL"/>
</dbReference>
<dbReference type="GO" id="GO:0005516">
    <property type="term" value="F:calmodulin binding"/>
    <property type="evidence" value="ECO:0007669"/>
    <property type="project" value="UniProtKB-KW"/>
</dbReference>
<dbReference type="GO" id="GO:0007015">
    <property type="term" value="P:actin filament organization"/>
    <property type="evidence" value="ECO:0000318"/>
    <property type="project" value="GO_Central"/>
</dbReference>
<dbReference type="GO" id="GO:0031032">
    <property type="term" value="P:actomyosin structure organization"/>
    <property type="evidence" value="ECO:0007669"/>
    <property type="project" value="InterPro"/>
</dbReference>
<dbReference type="GO" id="GO:0071260">
    <property type="term" value="P:cellular response to mechanical stimulus"/>
    <property type="evidence" value="ECO:0000314"/>
    <property type="project" value="MGI"/>
</dbReference>
<dbReference type="GO" id="GO:0007010">
    <property type="term" value="P:cytoskeleton organization"/>
    <property type="evidence" value="ECO:0000304"/>
    <property type="project" value="ProtInc"/>
</dbReference>
<dbReference type="GO" id="GO:0051649">
    <property type="term" value="P:establishment of localization in cell"/>
    <property type="evidence" value="ECO:0007669"/>
    <property type="project" value="Ensembl"/>
</dbReference>
<dbReference type="GO" id="GO:0030097">
    <property type="term" value="P:hemopoiesis"/>
    <property type="evidence" value="ECO:0007669"/>
    <property type="project" value="Ensembl"/>
</dbReference>
<dbReference type="GO" id="GO:1905517">
    <property type="term" value="P:macrophage migration"/>
    <property type="evidence" value="ECO:0007669"/>
    <property type="project" value="Ensembl"/>
</dbReference>
<dbReference type="GO" id="GO:1905522">
    <property type="term" value="P:negative regulation of macrophage migration"/>
    <property type="evidence" value="ECO:0007669"/>
    <property type="project" value="Ensembl"/>
</dbReference>
<dbReference type="GO" id="GO:0050765">
    <property type="term" value="P:negative regulation of phagocytosis"/>
    <property type="evidence" value="ECO:0007669"/>
    <property type="project" value="Ensembl"/>
</dbReference>
<dbReference type="GO" id="GO:0006909">
    <property type="term" value="P:phagocytosis"/>
    <property type="evidence" value="ECO:0007669"/>
    <property type="project" value="Ensembl"/>
</dbReference>
<dbReference type="GO" id="GO:0010628">
    <property type="term" value="P:positive regulation of gene expression"/>
    <property type="evidence" value="ECO:0007669"/>
    <property type="project" value="Ensembl"/>
</dbReference>
<dbReference type="GO" id="GO:0032970">
    <property type="term" value="P:regulation of actin filament-based process"/>
    <property type="evidence" value="ECO:0000314"/>
    <property type="project" value="MGI"/>
</dbReference>
<dbReference type="GO" id="GO:0032944">
    <property type="term" value="P:regulation of mononuclear cell proliferation"/>
    <property type="evidence" value="ECO:0007669"/>
    <property type="project" value="Ensembl"/>
</dbReference>
<dbReference type="GO" id="GO:0042060">
    <property type="term" value="P:wound healing"/>
    <property type="evidence" value="ECO:0007669"/>
    <property type="project" value="Ensembl"/>
</dbReference>
<dbReference type="CDD" id="cd21283">
    <property type="entry name" value="CH_CNN2"/>
    <property type="match status" value="1"/>
</dbReference>
<dbReference type="FunFam" id="1.10.418.10:FF:000040">
    <property type="entry name" value="Calponin"/>
    <property type="match status" value="1"/>
</dbReference>
<dbReference type="Gene3D" id="1.10.418.10">
    <property type="entry name" value="Calponin-like domain"/>
    <property type="match status" value="1"/>
</dbReference>
<dbReference type="InterPro" id="IPR050606">
    <property type="entry name" value="Calponin-like"/>
</dbReference>
<dbReference type="InterPro" id="IPR001997">
    <property type="entry name" value="Calponin/LIMCH1"/>
</dbReference>
<dbReference type="InterPro" id="IPR000557">
    <property type="entry name" value="Calponin_repeat"/>
</dbReference>
<dbReference type="InterPro" id="IPR001715">
    <property type="entry name" value="CH_dom"/>
</dbReference>
<dbReference type="InterPro" id="IPR036872">
    <property type="entry name" value="CH_dom_sf"/>
</dbReference>
<dbReference type="InterPro" id="IPR003096">
    <property type="entry name" value="SM22_calponin"/>
</dbReference>
<dbReference type="PANTHER" id="PTHR47385">
    <property type="entry name" value="CALPONIN"/>
    <property type="match status" value="1"/>
</dbReference>
<dbReference type="PANTHER" id="PTHR47385:SF7">
    <property type="entry name" value="CALPONIN-2"/>
    <property type="match status" value="1"/>
</dbReference>
<dbReference type="Pfam" id="PF00402">
    <property type="entry name" value="Calponin"/>
    <property type="match status" value="3"/>
</dbReference>
<dbReference type="Pfam" id="PF00307">
    <property type="entry name" value="CH"/>
    <property type="match status" value="1"/>
</dbReference>
<dbReference type="PRINTS" id="PR00889">
    <property type="entry name" value="CALPONIN"/>
</dbReference>
<dbReference type="PRINTS" id="PR00888">
    <property type="entry name" value="SM22CALPONIN"/>
</dbReference>
<dbReference type="SMART" id="SM00033">
    <property type="entry name" value="CH"/>
    <property type="match status" value="1"/>
</dbReference>
<dbReference type="SUPFAM" id="SSF47576">
    <property type="entry name" value="Calponin-homology domain, CH-domain"/>
    <property type="match status" value="1"/>
</dbReference>
<dbReference type="PROSITE" id="PS01052">
    <property type="entry name" value="CALPONIN_1"/>
    <property type="match status" value="3"/>
</dbReference>
<dbReference type="PROSITE" id="PS51122">
    <property type="entry name" value="CALPONIN_2"/>
    <property type="match status" value="3"/>
</dbReference>
<dbReference type="PROSITE" id="PS50021">
    <property type="entry name" value="CH"/>
    <property type="match status" value="1"/>
</dbReference>
<evidence type="ECO:0000255" key="1">
    <source>
        <dbReference type="PROSITE-ProRule" id="PRU00044"/>
    </source>
</evidence>
<evidence type="ECO:0000256" key="2">
    <source>
        <dbReference type="SAM" id="MobiDB-lite"/>
    </source>
</evidence>
<evidence type="ECO:0000269" key="3">
    <source>
    </source>
</evidence>
<evidence type="ECO:0000303" key="4">
    <source>
    </source>
</evidence>
<evidence type="ECO:0000305" key="5"/>
<evidence type="ECO:0007744" key="6">
    <source>
    </source>
</evidence>
<evidence type="ECO:0007744" key="7">
    <source>
    </source>
</evidence>
<evidence type="ECO:0007744" key="8">
    <source>
    </source>
</evidence>
<evidence type="ECO:0007829" key="9">
    <source>
        <dbReference type="PDB" id="1WYN"/>
    </source>
</evidence>